<dbReference type="EMBL" id="AE008384">
    <property type="protein sequence ID" value="AAM30608.1"/>
    <property type="molecule type" value="Genomic_DNA"/>
</dbReference>
<dbReference type="RefSeq" id="WP_011032862.1">
    <property type="nucleotide sequence ID" value="NC_003901.1"/>
</dbReference>
<dbReference type="SMR" id="Q8PYF0"/>
<dbReference type="KEGG" id="mma:MM_0912"/>
<dbReference type="PATRIC" id="fig|192952.21.peg.1075"/>
<dbReference type="eggNOG" id="arCOG04900">
    <property type="taxonomic scope" value="Archaea"/>
</dbReference>
<dbReference type="HOGENOM" id="CLU_533841_0_0_2"/>
<dbReference type="Proteomes" id="UP000000595">
    <property type="component" value="Chromosome"/>
</dbReference>
<dbReference type="HAMAP" id="MF_01089">
    <property type="entry name" value="UPF0288"/>
    <property type="match status" value="1"/>
</dbReference>
<dbReference type="InterPro" id="IPR016466">
    <property type="entry name" value="Methan_mark_3"/>
</dbReference>
<dbReference type="NCBIfam" id="TIGR03268">
    <property type="entry name" value="methan_mark_3"/>
    <property type="match status" value="1"/>
</dbReference>
<dbReference type="PIRSF" id="PIRSF005852">
    <property type="entry name" value="UCP005852"/>
    <property type="match status" value="1"/>
</dbReference>
<accession>Q8PYF0</accession>
<sequence>MPITSNEISVEVNGQVYTLPAGSTLGDALKVSRAPYIAGAAIGILKKAAEKRTEKITEYAINTPKGELRIEIKDPESTSGKLWAEHYKEYEGKDIHWESPEALAFGPFEADIKPSRETGNFEAFDVLFGAGGFDPHNTHLILSRKRHSAEYGSPDDGVFASIVTGRKIISKISKEDSILSIEPVIEWERITEKTCTTDLSTPLEDEDSVYTYFEVELSRNAPVGAEHFYALTREGTLKVDAVTSSFISDDSLREVPAPYENFEQRREGAISVRTVGYGTGRIYISREERPSSLVHSVVGQVTKGLELIKLAEKGQKLSVESLPPQIVLLGHSFEEVEPLLSSIGVELIKEGYAGENSVIVRQEPPTTLEILGEAKVKAYAVARTKLIEVELYTEIAPKSIDFFRHALDLKTKTVGKLPVHMIYETTYLFKTEKEMVKYKEILPENTPEKKVLAGEIGITNQAAKRMGTIGVRLIDDDLFGPTGEKFSSTNIIGRIVEPDRLKGIKEGDAIYITEVARKENGGQKN</sequence>
<protein>
    <recommendedName>
        <fullName evidence="1">UPF0288 protein MM_0912</fullName>
    </recommendedName>
</protein>
<comment type="similarity">
    <text evidence="1">Belongs to the UPF0288 family.</text>
</comment>
<feature type="chain" id="PRO_0000156053" description="UPF0288 protein MM_0912">
    <location>
        <begin position="1"/>
        <end position="525"/>
    </location>
</feature>
<proteinExistence type="inferred from homology"/>
<name>Y912_METMA</name>
<reference key="1">
    <citation type="journal article" date="2002" name="J. Mol. Microbiol. Biotechnol.">
        <title>The genome of Methanosarcina mazei: evidence for lateral gene transfer between Bacteria and Archaea.</title>
        <authorList>
            <person name="Deppenmeier U."/>
            <person name="Johann A."/>
            <person name="Hartsch T."/>
            <person name="Merkl R."/>
            <person name="Schmitz R.A."/>
            <person name="Martinez-Arias R."/>
            <person name="Henne A."/>
            <person name="Wiezer A."/>
            <person name="Baeumer S."/>
            <person name="Jacobi C."/>
            <person name="Brueggemann H."/>
            <person name="Lienard T."/>
            <person name="Christmann A."/>
            <person name="Boemecke M."/>
            <person name="Steckel S."/>
            <person name="Bhattacharyya A."/>
            <person name="Lykidis A."/>
            <person name="Overbeek R."/>
            <person name="Klenk H.-P."/>
            <person name="Gunsalus R.P."/>
            <person name="Fritz H.-J."/>
            <person name="Gottschalk G."/>
        </authorList>
    </citation>
    <scope>NUCLEOTIDE SEQUENCE [LARGE SCALE GENOMIC DNA]</scope>
    <source>
        <strain>ATCC BAA-159 / DSM 3647 / Goe1 / Go1 / JCM 11833 / OCM 88</strain>
    </source>
</reference>
<evidence type="ECO:0000255" key="1">
    <source>
        <dbReference type="HAMAP-Rule" id="MF_01089"/>
    </source>
</evidence>
<organism>
    <name type="scientific">Methanosarcina mazei (strain ATCC BAA-159 / DSM 3647 / Goe1 / Go1 / JCM 11833 / OCM 88)</name>
    <name type="common">Methanosarcina frisia</name>
    <dbReference type="NCBI Taxonomy" id="192952"/>
    <lineage>
        <taxon>Archaea</taxon>
        <taxon>Methanobacteriati</taxon>
        <taxon>Methanobacteriota</taxon>
        <taxon>Stenosarchaea group</taxon>
        <taxon>Methanomicrobia</taxon>
        <taxon>Methanosarcinales</taxon>
        <taxon>Methanosarcinaceae</taxon>
        <taxon>Methanosarcina</taxon>
    </lineage>
</organism>
<gene>
    <name type="ordered locus">MM_0912</name>
</gene>